<proteinExistence type="inferred from homology"/>
<name>RUVC_DICNV</name>
<accession>A5EXG1</accession>
<evidence type="ECO:0000255" key="1">
    <source>
        <dbReference type="HAMAP-Rule" id="MF_00034"/>
    </source>
</evidence>
<comment type="function">
    <text evidence="1">The RuvA-RuvB-RuvC complex processes Holliday junction (HJ) DNA during genetic recombination and DNA repair. Endonuclease that resolves HJ intermediates. Cleaves cruciform DNA by making single-stranded nicks across the HJ at symmetrical positions within the homologous arms, yielding a 5'-phosphate and a 3'-hydroxyl group; requires a central core of homology in the junction. The consensus cleavage sequence is 5'-(A/T)TT(C/G)-3'. Cleavage occurs on the 3'-side of the TT dinucleotide at the point of strand exchange. HJ branch migration catalyzed by RuvA-RuvB allows RuvC to scan DNA until it finds its consensus sequence, where it cleaves and resolves the cruciform DNA.</text>
</comment>
<comment type="catalytic activity">
    <reaction evidence="1">
        <text>Endonucleolytic cleavage at a junction such as a reciprocal single-stranded crossover between two homologous DNA duplexes (Holliday junction).</text>
        <dbReference type="EC" id="3.1.21.10"/>
    </reaction>
</comment>
<comment type="cofactor">
    <cofactor evidence="1">
        <name>Mg(2+)</name>
        <dbReference type="ChEBI" id="CHEBI:18420"/>
    </cofactor>
    <text evidence="1">Binds 2 Mg(2+) ion per subunit.</text>
</comment>
<comment type="subunit">
    <text evidence="1">Homodimer which binds Holliday junction (HJ) DNA. The HJ becomes 2-fold symmetrical on binding to RuvC with unstacked arms; it has a different conformation from HJ DNA in complex with RuvA. In the full resolvosome a probable DNA-RuvA(4)-RuvB(12)-RuvC(2) complex forms which resolves the HJ.</text>
</comment>
<comment type="subcellular location">
    <subcellularLocation>
        <location evidence="1">Cytoplasm</location>
    </subcellularLocation>
</comment>
<comment type="similarity">
    <text evidence="1">Belongs to the RuvC family.</text>
</comment>
<organism>
    <name type="scientific">Dichelobacter nodosus (strain VCS1703A)</name>
    <dbReference type="NCBI Taxonomy" id="246195"/>
    <lineage>
        <taxon>Bacteria</taxon>
        <taxon>Pseudomonadati</taxon>
        <taxon>Pseudomonadota</taxon>
        <taxon>Gammaproteobacteria</taxon>
        <taxon>Cardiobacteriales</taxon>
        <taxon>Cardiobacteriaceae</taxon>
        <taxon>Dichelobacter</taxon>
    </lineage>
</organism>
<gene>
    <name evidence="1" type="primary">ruvC</name>
    <name type="ordered locus">DNO_1178</name>
</gene>
<dbReference type="EC" id="3.1.21.10" evidence="1"/>
<dbReference type="EMBL" id="CP000513">
    <property type="protein sequence ID" value="ABQ13159.1"/>
    <property type="molecule type" value="Genomic_DNA"/>
</dbReference>
<dbReference type="RefSeq" id="WP_012031482.1">
    <property type="nucleotide sequence ID" value="NC_009446.1"/>
</dbReference>
<dbReference type="SMR" id="A5EXG1"/>
<dbReference type="STRING" id="246195.DNO_1178"/>
<dbReference type="KEGG" id="dno:DNO_1178"/>
<dbReference type="eggNOG" id="COG0817">
    <property type="taxonomic scope" value="Bacteria"/>
</dbReference>
<dbReference type="HOGENOM" id="CLU_091257_2_1_6"/>
<dbReference type="OrthoDB" id="9805499at2"/>
<dbReference type="Proteomes" id="UP000000248">
    <property type="component" value="Chromosome"/>
</dbReference>
<dbReference type="GO" id="GO:0005737">
    <property type="term" value="C:cytoplasm"/>
    <property type="evidence" value="ECO:0007669"/>
    <property type="project" value="UniProtKB-SubCell"/>
</dbReference>
<dbReference type="GO" id="GO:0048476">
    <property type="term" value="C:Holliday junction resolvase complex"/>
    <property type="evidence" value="ECO:0007669"/>
    <property type="project" value="UniProtKB-UniRule"/>
</dbReference>
<dbReference type="GO" id="GO:0008821">
    <property type="term" value="F:crossover junction DNA endonuclease activity"/>
    <property type="evidence" value="ECO:0007669"/>
    <property type="project" value="UniProtKB-UniRule"/>
</dbReference>
<dbReference type="GO" id="GO:0003677">
    <property type="term" value="F:DNA binding"/>
    <property type="evidence" value="ECO:0007669"/>
    <property type="project" value="UniProtKB-KW"/>
</dbReference>
<dbReference type="GO" id="GO:0000287">
    <property type="term" value="F:magnesium ion binding"/>
    <property type="evidence" value="ECO:0007669"/>
    <property type="project" value="UniProtKB-UniRule"/>
</dbReference>
<dbReference type="GO" id="GO:0006310">
    <property type="term" value="P:DNA recombination"/>
    <property type="evidence" value="ECO:0007669"/>
    <property type="project" value="UniProtKB-UniRule"/>
</dbReference>
<dbReference type="GO" id="GO:0006281">
    <property type="term" value="P:DNA repair"/>
    <property type="evidence" value="ECO:0007669"/>
    <property type="project" value="UniProtKB-UniRule"/>
</dbReference>
<dbReference type="CDD" id="cd16962">
    <property type="entry name" value="RuvC"/>
    <property type="match status" value="1"/>
</dbReference>
<dbReference type="FunFam" id="3.30.420.10:FF:000002">
    <property type="entry name" value="Crossover junction endodeoxyribonuclease RuvC"/>
    <property type="match status" value="1"/>
</dbReference>
<dbReference type="Gene3D" id="3.30.420.10">
    <property type="entry name" value="Ribonuclease H-like superfamily/Ribonuclease H"/>
    <property type="match status" value="1"/>
</dbReference>
<dbReference type="HAMAP" id="MF_00034">
    <property type="entry name" value="RuvC"/>
    <property type="match status" value="1"/>
</dbReference>
<dbReference type="InterPro" id="IPR012337">
    <property type="entry name" value="RNaseH-like_sf"/>
</dbReference>
<dbReference type="InterPro" id="IPR036397">
    <property type="entry name" value="RNaseH_sf"/>
</dbReference>
<dbReference type="InterPro" id="IPR020563">
    <property type="entry name" value="X-over_junc_endoDNase_Mg_BS"/>
</dbReference>
<dbReference type="InterPro" id="IPR002176">
    <property type="entry name" value="X-over_junc_endoDNase_RuvC"/>
</dbReference>
<dbReference type="NCBIfam" id="TIGR00228">
    <property type="entry name" value="ruvC"/>
    <property type="match status" value="1"/>
</dbReference>
<dbReference type="PANTHER" id="PTHR30194">
    <property type="entry name" value="CROSSOVER JUNCTION ENDODEOXYRIBONUCLEASE RUVC"/>
    <property type="match status" value="1"/>
</dbReference>
<dbReference type="PANTHER" id="PTHR30194:SF3">
    <property type="entry name" value="CROSSOVER JUNCTION ENDODEOXYRIBONUCLEASE RUVC"/>
    <property type="match status" value="1"/>
</dbReference>
<dbReference type="Pfam" id="PF02075">
    <property type="entry name" value="RuvC"/>
    <property type="match status" value="1"/>
</dbReference>
<dbReference type="PRINTS" id="PR00696">
    <property type="entry name" value="RSOLVASERUVC"/>
</dbReference>
<dbReference type="SUPFAM" id="SSF53098">
    <property type="entry name" value="Ribonuclease H-like"/>
    <property type="match status" value="1"/>
</dbReference>
<dbReference type="PROSITE" id="PS01321">
    <property type="entry name" value="RUVC"/>
    <property type="match status" value="1"/>
</dbReference>
<keyword id="KW-0963">Cytoplasm</keyword>
<keyword id="KW-0227">DNA damage</keyword>
<keyword id="KW-0233">DNA recombination</keyword>
<keyword id="KW-0234">DNA repair</keyword>
<keyword id="KW-0238">DNA-binding</keyword>
<keyword id="KW-0255">Endonuclease</keyword>
<keyword id="KW-0378">Hydrolase</keyword>
<keyword id="KW-0460">Magnesium</keyword>
<keyword id="KW-0479">Metal-binding</keyword>
<keyword id="KW-0540">Nuclease</keyword>
<keyword id="KW-1185">Reference proteome</keyword>
<reference key="1">
    <citation type="journal article" date="2007" name="Nat. Biotechnol.">
        <title>Genome sequence and identification of candidate vaccine antigens from the animal pathogen Dichelobacter nodosus.</title>
        <authorList>
            <person name="Myers G.S.A."/>
            <person name="Parker D."/>
            <person name="Al-Hasani K."/>
            <person name="Kennan R.M."/>
            <person name="Seemann T."/>
            <person name="Ren Q."/>
            <person name="Badger J.H."/>
            <person name="Selengut J.D."/>
            <person name="Deboy R.T."/>
            <person name="Tettelin H."/>
            <person name="Boyce J.D."/>
            <person name="McCarl V.P."/>
            <person name="Han X."/>
            <person name="Nelson W.C."/>
            <person name="Madupu R."/>
            <person name="Mohamoud Y."/>
            <person name="Holley T."/>
            <person name="Fedorova N."/>
            <person name="Khouri H."/>
            <person name="Bottomley S.P."/>
            <person name="Whittington R.J."/>
            <person name="Adler B."/>
            <person name="Songer J.G."/>
            <person name="Rood J.I."/>
            <person name="Paulsen I.T."/>
        </authorList>
    </citation>
    <scope>NUCLEOTIDE SEQUENCE [LARGE SCALE GENOMIC DNA]</scope>
    <source>
        <strain>VCS1703A</strain>
    </source>
</reference>
<protein>
    <recommendedName>
        <fullName evidence="1">Crossover junction endodeoxyribonuclease RuvC</fullName>
        <ecNumber evidence="1">3.1.21.10</ecNumber>
    </recommendedName>
    <alternativeName>
        <fullName evidence="1">Holliday junction nuclease RuvC</fullName>
    </alternativeName>
    <alternativeName>
        <fullName evidence="1">Holliday junction resolvase RuvC</fullName>
    </alternativeName>
</protein>
<feature type="chain" id="PRO_0000332416" description="Crossover junction endodeoxyribonuclease RuvC">
    <location>
        <begin position="1"/>
        <end position="176"/>
    </location>
</feature>
<feature type="active site" evidence="1">
    <location>
        <position position="10"/>
    </location>
</feature>
<feature type="active site" evidence="1">
    <location>
        <position position="69"/>
    </location>
</feature>
<feature type="active site" evidence="1">
    <location>
        <position position="141"/>
    </location>
</feature>
<feature type="binding site" evidence="1">
    <location>
        <position position="10"/>
    </location>
    <ligand>
        <name>Mg(2+)</name>
        <dbReference type="ChEBI" id="CHEBI:18420"/>
        <label>1</label>
    </ligand>
</feature>
<feature type="binding site" evidence="1">
    <location>
        <position position="69"/>
    </location>
    <ligand>
        <name>Mg(2+)</name>
        <dbReference type="ChEBI" id="CHEBI:18420"/>
        <label>2</label>
    </ligand>
</feature>
<feature type="binding site" evidence="1">
    <location>
        <position position="141"/>
    </location>
    <ligand>
        <name>Mg(2+)</name>
        <dbReference type="ChEBI" id="CHEBI:18420"/>
        <label>1</label>
    </ligand>
</feature>
<sequence>MAICRILGIDPGSRITGYGIIDVRGTAIDYVDSGCIRLATQLMPQRLMTIHQGIFELVQQYHPQQFAIEAIFVHKNPNSALKLGQARGVAICAAVLSGLSINEYAAKSIKQAVVGKGGADKIQVQHMVKILLNRQGAIQSDAADALAVAITHAHHLQTLACQRPRQTDYWVNGNAS</sequence>